<name>CALM_CAEEL</name>
<feature type="initiator methionine" description="Removed" evidence="1">
    <location>
        <position position="1"/>
    </location>
</feature>
<feature type="chain" id="PRO_0000198250" description="Calmodulin">
    <location>
        <begin position="2"/>
        <end position="149"/>
    </location>
</feature>
<feature type="domain" description="EF-hand 1" evidence="2">
    <location>
        <begin position="8"/>
        <end position="43"/>
    </location>
</feature>
<feature type="domain" description="EF-hand 2" evidence="2">
    <location>
        <begin position="44"/>
        <end position="79"/>
    </location>
</feature>
<feature type="domain" description="EF-hand 3" evidence="2">
    <location>
        <begin position="81"/>
        <end position="116"/>
    </location>
</feature>
<feature type="domain" description="EF-hand 4" evidence="2">
    <location>
        <begin position="117"/>
        <end position="149"/>
    </location>
</feature>
<feature type="binding site" evidence="2">
    <location>
        <position position="21"/>
    </location>
    <ligand>
        <name>Ca(2+)</name>
        <dbReference type="ChEBI" id="CHEBI:29108"/>
        <label>1</label>
    </ligand>
</feature>
<feature type="binding site" evidence="2">
    <location>
        <position position="23"/>
    </location>
    <ligand>
        <name>Ca(2+)</name>
        <dbReference type="ChEBI" id="CHEBI:29108"/>
        <label>1</label>
    </ligand>
</feature>
<feature type="binding site" evidence="2">
    <location>
        <position position="25"/>
    </location>
    <ligand>
        <name>Ca(2+)</name>
        <dbReference type="ChEBI" id="CHEBI:29108"/>
        <label>1</label>
    </ligand>
</feature>
<feature type="binding site" evidence="2">
    <location>
        <position position="27"/>
    </location>
    <ligand>
        <name>Ca(2+)</name>
        <dbReference type="ChEBI" id="CHEBI:29108"/>
        <label>1</label>
    </ligand>
</feature>
<feature type="binding site" evidence="2">
    <location>
        <position position="32"/>
    </location>
    <ligand>
        <name>Ca(2+)</name>
        <dbReference type="ChEBI" id="CHEBI:29108"/>
        <label>1</label>
    </ligand>
</feature>
<feature type="binding site" evidence="2">
    <location>
        <position position="57"/>
    </location>
    <ligand>
        <name>Ca(2+)</name>
        <dbReference type="ChEBI" id="CHEBI:29108"/>
        <label>2</label>
    </ligand>
</feature>
<feature type="binding site" evidence="2">
    <location>
        <position position="59"/>
    </location>
    <ligand>
        <name>Ca(2+)</name>
        <dbReference type="ChEBI" id="CHEBI:29108"/>
        <label>2</label>
    </ligand>
</feature>
<feature type="binding site" evidence="2">
    <location>
        <position position="61"/>
    </location>
    <ligand>
        <name>Ca(2+)</name>
        <dbReference type="ChEBI" id="CHEBI:29108"/>
        <label>2</label>
    </ligand>
</feature>
<feature type="binding site" evidence="2">
    <location>
        <position position="63"/>
    </location>
    <ligand>
        <name>Ca(2+)</name>
        <dbReference type="ChEBI" id="CHEBI:29108"/>
        <label>2</label>
    </ligand>
</feature>
<feature type="binding site" evidence="2">
    <location>
        <position position="68"/>
    </location>
    <ligand>
        <name>Ca(2+)</name>
        <dbReference type="ChEBI" id="CHEBI:29108"/>
        <label>2</label>
    </ligand>
</feature>
<feature type="binding site" evidence="2">
    <location>
        <position position="94"/>
    </location>
    <ligand>
        <name>Ca(2+)</name>
        <dbReference type="ChEBI" id="CHEBI:29108"/>
        <label>3</label>
    </ligand>
</feature>
<feature type="binding site" evidence="2">
    <location>
        <position position="96"/>
    </location>
    <ligand>
        <name>Ca(2+)</name>
        <dbReference type="ChEBI" id="CHEBI:29108"/>
        <label>3</label>
    </ligand>
</feature>
<feature type="binding site" evidence="2">
    <location>
        <position position="98"/>
    </location>
    <ligand>
        <name>Ca(2+)</name>
        <dbReference type="ChEBI" id="CHEBI:29108"/>
        <label>3</label>
    </ligand>
</feature>
<feature type="binding site" evidence="2">
    <location>
        <position position="105"/>
    </location>
    <ligand>
        <name>Ca(2+)</name>
        <dbReference type="ChEBI" id="CHEBI:29108"/>
        <label>3</label>
    </ligand>
</feature>
<feature type="binding site" evidence="2">
    <location>
        <position position="130"/>
    </location>
    <ligand>
        <name>Ca(2+)</name>
        <dbReference type="ChEBI" id="CHEBI:29108"/>
        <label>4</label>
    </ligand>
</feature>
<feature type="binding site" evidence="2">
    <location>
        <position position="132"/>
    </location>
    <ligand>
        <name>Ca(2+)</name>
        <dbReference type="ChEBI" id="CHEBI:29108"/>
        <label>4</label>
    </ligand>
</feature>
<feature type="binding site" evidence="2">
    <location>
        <position position="134"/>
    </location>
    <ligand>
        <name>Ca(2+)</name>
        <dbReference type="ChEBI" id="CHEBI:29108"/>
        <label>4</label>
    </ligand>
</feature>
<feature type="binding site" evidence="2">
    <location>
        <position position="136"/>
    </location>
    <ligand>
        <name>Ca(2+)</name>
        <dbReference type="ChEBI" id="CHEBI:29108"/>
        <label>4</label>
    </ligand>
</feature>
<feature type="binding site" evidence="2">
    <location>
        <position position="141"/>
    </location>
    <ligand>
        <name>Ca(2+)</name>
        <dbReference type="ChEBI" id="CHEBI:29108"/>
        <label>4</label>
    </ligand>
</feature>
<feature type="modified residue" description="N-acetylalanine" evidence="1">
    <location>
        <position position="2"/>
    </location>
</feature>
<feature type="modified residue" description="N6,N6,N6-trimethyllysine" evidence="1">
    <location>
        <position position="116"/>
    </location>
</feature>
<feature type="helix" evidence="5">
    <location>
        <begin position="9"/>
        <end position="20"/>
    </location>
</feature>
<feature type="strand" evidence="5">
    <location>
        <begin position="25"/>
        <end position="28"/>
    </location>
</feature>
<feature type="helix" evidence="5">
    <location>
        <begin position="30"/>
        <end position="39"/>
    </location>
</feature>
<feature type="helix" evidence="5">
    <location>
        <begin position="46"/>
        <end position="54"/>
    </location>
</feature>
<feature type="strand" evidence="5">
    <location>
        <begin position="61"/>
        <end position="65"/>
    </location>
</feature>
<feature type="helix" evidence="5">
    <location>
        <begin position="66"/>
        <end position="93"/>
    </location>
</feature>
<feature type="strand" evidence="5">
    <location>
        <begin position="98"/>
        <end position="101"/>
    </location>
</feature>
<feature type="helix" evidence="5">
    <location>
        <begin position="103"/>
        <end position="111"/>
    </location>
</feature>
<feature type="turn" evidence="5">
    <location>
        <begin position="112"/>
        <end position="114"/>
    </location>
</feature>
<feature type="helix" evidence="5">
    <location>
        <begin position="119"/>
        <end position="129"/>
    </location>
</feature>
<feature type="strand" evidence="5">
    <location>
        <begin position="134"/>
        <end position="138"/>
    </location>
</feature>
<feature type="helix" evidence="5">
    <location>
        <begin position="139"/>
        <end position="145"/>
    </location>
</feature>
<comment type="function">
    <text>Calmodulin mediates the control of a large number of enzymes, ion channels and other proteins by Ca(2+). Among the enzymes to be stimulated by the calmodulin-Ca(2+) complex are a number of protein kinases and phosphatases.</text>
</comment>
<comment type="subunit">
    <text evidence="3">Interacts (in the presence of Ca(2+)) with pde-1, madf-3, rpl-7A, tax-6, efk-1, npp-1, obr-4, sos-1, akt-1, unc-13, tag-196, ugt-48, nmy-2, F27D4.4, ddx-23, efa-6 and R11H6.4.</text>
</comment>
<comment type="miscellaneous">
    <text>This protein has four functional calcium-binding sites.</text>
</comment>
<comment type="similarity">
    <text evidence="4">Belongs to the calmodulin family.</text>
</comment>
<sequence length="149" mass="16825">MADQLTEEQIAEFKEAFSLFDKDGDGTITTKELGTVMRSLGQNPTEAELQDMINEVDADGNGTIDFPEFLTMMARKMKDTDSEEEIREAFRVFDKDGNGFISAAELRHVMTNLGEKLTDEEVDEMIREADIDGDGQVNYEEFVTMMTTK</sequence>
<organism>
    <name type="scientific">Caenorhabditis elegans</name>
    <dbReference type="NCBI Taxonomy" id="6239"/>
    <lineage>
        <taxon>Eukaryota</taxon>
        <taxon>Metazoa</taxon>
        <taxon>Ecdysozoa</taxon>
        <taxon>Nematoda</taxon>
        <taxon>Chromadorea</taxon>
        <taxon>Rhabditida</taxon>
        <taxon>Rhabditina</taxon>
        <taxon>Rhabditomorpha</taxon>
        <taxon>Rhabditoidea</taxon>
        <taxon>Rhabditidae</taxon>
        <taxon>Peloderinae</taxon>
        <taxon>Caenorhabditis</taxon>
    </lineage>
</organism>
<gene>
    <name type="primary">cmd-1</name>
    <name type="ORF">T21H3.3</name>
</gene>
<keyword id="KW-0002">3D-structure</keyword>
<keyword id="KW-0007">Acetylation</keyword>
<keyword id="KW-0106">Calcium</keyword>
<keyword id="KW-0479">Metal-binding</keyword>
<keyword id="KW-0488">Methylation</keyword>
<keyword id="KW-1185">Reference proteome</keyword>
<keyword id="KW-0677">Repeat</keyword>
<evidence type="ECO:0000250" key="1"/>
<evidence type="ECO:0000255" key="2">
    <source>
        <dbReference type="PROSITE-ProRule" id="PRU00448"/>
    </source>
</evidence>
<evidence type="ECO:0000269" key="3">
    <source>
    </source>
</evidence>
<evidence type="ECO:0000305" key="4"/>
<evidence type="ECO:0007829" key="5">
    <source>
        <dbReference type="PDB" id="1OOJ"/>
    </source>
</evidence>
<dbReference type="EMBL" id="AJ132193">
    <property type="protein sequence ID" value="CAA10601.1"/>
    <property type="molecule type" value="mRNA"/>
</dbReference>
<dbReference type="EMBL" id="FO081216">
    <property type="protein sequence ID" value="CCD69969.1"/>
    <property type="molecule type" value="Genomic_DNA"/>
</dbReference>
<dbReference type="PIR" id="T31737">
    <property type="entry name" value="T31737"/>
</dbReference>
<dbReference type="RefSeq" id="NP_503386.1">
    <property type="nucleotide sequence ID" value="NM_070985.7"/>
</dbReference>
<dbReference type="PDB" id="1OOJ">
    <property type="method" value="X-ray"/>
    <property type="resolution" value="2.11 A"/>
    <property type="chains" value="A=1-149"/>
</dbReference>
<dbReference type="PDB" id="5H7D">
    <property type="method" value="X-ray"/>
    <property type="resolution" value="2.57 A"/>
    <property type="chains" value="E/F/G/H/K/L/O/P=1-75"/>
</dbReference>
<dbReference type="PDBsum" id="1OOJ"/>
<dbReference type="PDBsum" id="5H7D"/>
<dbReference type="BMRB" id="O16305"/>
<dbReference type="SMR" id="O16305"/>
<dbReference type="BioGRID" id="43683">
    <property type="interactions" value="69"/>
</dbReference>
<dbReference type="ComplexPortal" id="CPX-1128">
    <property type="entry name" value="Calcineurin-Calmodulin complex"/>
</dbReference>
<dbReference type="DIP" id="DIP-25019N"/>
<dbReference type="FunCoup" id="O16305">
    <property type="interactions" value="2692"/>
</dbReference>
<dbReference type="IntAct" id="O16305">
    <property type="interactions" value="1"/>
</dbReference>
<dbReference type="STRING" id="6239.T21H3.3a.1"/>
<dbReference type="iPTMnet" id="O16305"/>
<dbReference type="PaxDb" id="6239-T21H3.3"/>
<dbReference type="PeptideAtlas" id="O16305"/>
<dbReference type="EnsemblMetazoa" id="T21H3.3a.1">
    <property type="protein sequence ID" value="T21H3.3a.1"/>
    <property type="gene ID" value="WBGene00000552"/>
</dbReference>
<dbReference type="GeneID" id="178614"/>
<dbReference type="KEGG" id="cel:CELE_T21H3.3"/>
<dbReference type="UCSC" id="T21H3.3.1">
    <property type="organism name" value="c. elegans"/>
</dbReference>
<dbReference type="AGR" id="WB:WBGene00000552"/>
<dbReference type="CTD" id="178614"/>
<dbReference type="WormBase" id="T21H3.3a">
    <property type="protein sequence ID" value="CE13902"/>
    <property type="gene ID" value="WBGene00000552"/>
    <property type="gene designation" value="cmd-1"/>
</dbReference>
<dbReference type="eggNOG" id="KOG0027">
    <property type="taxonomic scope" value="Eukaryota"/>
</dbReference>
<dbReference type="GeneTree" id="ENSGT00940000162930"/>
<dbReference type="HOGENOM" id="CLU_061288_2_0_1"/>
<dbReference type="InParanoid" id="O16305"/>
<dbReference type="OMA" id="ARKMKEC"/>
<dbReference type="OrthoDB" id="26525at2759"/>
<dbReference type="PhylomeDB" id="O16305"/>
<dbReference type="EvolutionaryTrace" id="O16305"/>
<dbReference type="PRO" id="PR:O16305"/>
<dbReference type="Proteomes" id="UP000001940">
    <property type="component" value="Chromosome V"/>
</dbReference>
<dbReference type="Bgee" id="WBGene00000552">
    <property type="expression patterns" value="Expressed in pharyngeal muscle cell (C elegans) and 4 other cell types or tissues"/>
</dbReference>
<dbReference type="ExpressionAtlas" id="O16305">
    <property type="expression patterns" value="baseline and differential"/>
</dbReference>
<dbReference type="GO" id="GO:0005955">
    <property type="term" value="C:calcineurin complex"/>
    <property type="evidence" value="ECO:0000303"/>
    <property type="project" value="ComplexPortal"/>
</dbReference>
<dbReference type="GO" id="GO:0071944">
    <property type="term" value="C:cell periphery"/>
    <property type="evidence" value="ECO:0000314"/>
    <property type="project" value="WormBase"/>
</dbReference>
<dbReference type="GO" id="GO:0005813">
    <property type="term" value="C:centrosome"/>
    <property type="evidence" value="ECO:0000314"/>
    <property type="project" value="WormBase"/>
</dbReference>
<dbReference type="GO" id="GO:0005737">
    <property type="term" value="C:cytoplasm"/>
    <property type="evidence" value="ECO:0000318"/>
    <property type="project" value="GO_Central"/>
</dbReference>
<dbReference type="GO" id="GO:0072686">
    <property type="term" value="C:mitotic spindle"/>
    <property type="evidence" value="ECO:0000314"/>
    <property type="project" value="WormBase"/>
</dbReference>
<dbReference type="GO" id="GO:0031965">
    <property type="term" value="C:nuclear membrane"/>
    <property type="evidence" value="ECO:0000314"/>
    <property type="project" value="WormBase"/>
</dbReference>
<dbReference type="GO" id="GO:0005509">
    <property type="term" value="F:calcium ion binding"/>
    <property type="evidence" value="ECO:0000318"/>
    <property type="project" value="GO_Central"/>
</dbReference>
<dbReference type="GO" id="GO:0030234">
    <property type="term" value="F:enzyme regulator activity"/>
    <property type="evidence" value="ECO:0000318"/>
    <property type="project" value="GO_Central"/>
</dbReference>
<dbReference type="GO" id="GO:0043277">
    <property type="term" value="P:apoptotic cell clearance"/>
    <property type="evidence" value="ECO:0000315"/>
    <property type="project" value="WormBase"/>
</dbReference>
<dbReference type="GO" id="GO:0016477">
    <property type="term" value="P:cell migration"/>
    <property type="evidence" value="ECO:0000315"/>
    <property type="project" value="WormBase"/>
</dbReference>
<dbReference type="GO" id="GO:0009792">
    <property type="term" value="P:embryo development ending in birth or egg hatching"/>
    <property type="evidence" value="ECO:0000315"/>
    <property type="project" value="WormBase"/>
</dbReference>
<dbReference type="GO" id="GO:0051296">
    <property type="term" value="P:establishment of meiotic spindle orientation"/>
    <property type="evidence" value="ECO:0000315"/>
    <property type="project" value="WormBase"/>
</dbReference>
<dbReference type="GO" id="GO:0000226">
    <property type="term" value="P:microtubule cytoskeleton organization"/>
    <property type="evidence" value="ECO:0000318"/>
    <property type="project" value="GO_Central"/>
</dbReference>
<dbReference type="GO" id="GO:0010629">
    <property type="term" value="P:negative regulation of gene expression"/>
    <property type="evidence" value="ECO:0000315"/>
    <property type="project" value="UniProtKB"/>
</dbReference>
<dbReference type="GO" id="GO:0050918">
    <property type="term" value="P:positive chemotaxis"/>
    <property type="evidence" value="ECO:0000315"/>
    <property type="project" value="UniProtKB"/>
</dbReference>
<dbReference type="GO" id="GO:0042981">
    <property type="term" value="P:regulation of apoptotic process"/>
    <property type="evidence" value="ECO:0000315"/>
    <property type="project" value="WormBase"/>
</dbReference>
<dbReference type="GO" id="GO:0051726">
    <property type="term" value="P:regulation of cell cycle"/>
    <property type="evidence" value="ECO:0000315"/>
    <property type="project" value="WormBase"/>
</dbReference>
<dbReference type="GO" id="GO:0032880">
    <property type="term" value="P:regulation of protein localization"/>
    <property type="evidence" value="ECO:0000315"/>
    <property type="project" value="WormBase"/>
</dbReference>
<dbReference type="CDD" id="cd00051">
    <property type="entry name" value="EFh"/>
    <property type="match status" value="2"/>
</dbReference>
<dbReference type="FunFam" id="1.10.238.10:FF:000527">
    <property type="entry name" value="Calmodulin-3"/>
    <property type="match status" value="1"/>
</dbReference>
<dbReference type="Gene3D" id="1.10.238.10">
    <property type="entry name" value="EF-hand"/>
    <property type="match status" value="3"/>
</dbReference>
<dbReference type="InterPro" id="IPR050230">
    <property type="entry name" value="CALM/Myosin/TropC-like"/>
</dbReference>
<dbReference type="InterPro" id="IPR011992">
    <property type="entry name" value="EF-hand-dom_pair"/>
</dbReference>
<dbReference type="InterPro" id="IPR018247">
    <property type="entry name" value="EF_Hand_1_Ca_BS"/>
</dbReference>
<dbReference type="InterPro" id="IPR002048">
    <property type="entry name" value="EF_hand_dom"/>
</dbReference>
<dbReference type="PANTHER" id="PTHR23048:SF0">
    <property type="entry name" value="CALMODULIN LIKE 3"/>
    <property type="match status" value="1"/>
</dbReference>
<dbReference type="PANTHER" id="PTHR23048">
    <property type="entry name" value="MYOSIN LIGHT CHAIN 1, 3"/>
    <property type="match status" value="1"/>
</dbReference>
<dbReference type="Pfam" id="PF13499">
    <property type="entry name" value="EF-hand_7"/>
    <property type="match status" value="2"/>
</dbReference>
<dbReference type="SMART" id="SM00054">
    <property type="entry name" value="EFh"/>
    <property type="match status" value="4"/>
</dbReference>
<dbReference type="SUPFAM" id="SSF47473">
    <property type="entry name" value="EF-hand"/>
    <property type="match status" value="1"/>
</dbReference>
<dbReference type="PROSITE" id="PS00018">
    <property type="entry name" value="EF_HAND_1"/>
    <property type="match status" value="4"/>
</dbReference>
<dbReference type="PROSITE" id="PS50222">
    <property type="entry name" value="EF_HAND_2"/>
    <property type="match status" value="4"/>
</dbReference>
<protein>
    <recommendedName>
        <fullName>Calmodulin</fullName>
        <shortName>CaM</shortName>
    </recommendedName>
</protein>
<proteinExistence type="evidence at protein level"/>
<reference key="1">
    <citation type="submission" date="1999-01" db="EMBL/GenBank/DDBJ databases">
        <title>Expression and functional characterization of calmodulin from Caenorhabditis elegans.</title>
        <authorList>
            <person name="Kraev A."/>
            <person name="Gazzotti P."/>
        </authorList>
    </citation>
    <scope>NUCLEOTIDE SEQUENCE [MRNA]</scope>
    <source>
        <strain>Bristol N2</strain>
    </source>
</reference>
<reference key="2">
    <citation type="journal article" date="1998" name="Science">
        <title>Genome sequence of the nematode C. elegans: a platform for investigating biology.</title>
        <authorList>
            <consortium name="The C. elegans sequencing consortium"/>
        </authorList>
    </citation>
    <scope>NUCLEOTIDE SEQUENCE [LARGE SCALE GENOMIC DNA]</scope>
    <source>
        <strain>Bristol N2</strain>
    </source>
</reference>
<reference key="3">
    <citation type="journal article" date="2008" name="Cell Calcium">
        <title>Ca(2+)/Calmodulin-binding proteins from the C. elegans proteome.</title>
        <authorList>
            <person name="Shen X."/>
            <person name="Valencia C.A."/>
            <person name="Gao W."/>
            <person name="Cotten S.W."/>
            <person name="Dong B."/>
            <person name="Huang B.C."/>
            <person name="Liu R."/>
        </authorList>
    </citation>
    <scope>INTERACTION WITH PDE1; MADF-3; RPL-7A; TAX-6; EFK-1; NPP-1; OBR-4; SOS-1; AKT-1; UNC-13; TAG-196; UGT-48; NMY-2; F27D4.4; DDX-23; EFA-6 AND R11H6.4</scope>
</reference>
<reference key="4">
    <citation type="journal article" date="2003" name="Proteins">
        <title>Structural genomics of Caenorhabditis elegans: crystal structure of calmodulin.</title>
        <authorList>
            <person name="Symersky J."/>
            <person name="Lin G."/>
            <person name="Li S."/>
            <person name="Qiu S."/>
            <person name="Carson M."/>
            <person name="Schormann N."/>
            <person name="Luo M."/>
        </authorList>
    </citation>
    <scope>X-RAY CRYSTALLOGRAPHY (2.11 ANGSTROMS)</scope>
</reference>
<accession>O16305</accession>